<accession>Q8TGG8</accession>
<accession>Q4WSN7</accession>
<accession>Q6MYR7</accession>
<sequence>MAQTQRSRYLKTGAIVAALLLMLLWISPSRPMHPSFPQGQPSTSAPAKGKCSKPHDPKKPLIQYALMIDAGSQGSRIHVYRFNNCGPSPELEDEVFFQTEPKKGGSGLSSYKEDAEGAAKSLDPLMEVAMKNVPDEYKSCSPIAVKATAGLRMLGPELSQKILDAVRNRLETVYPFPVVSKEKGGVEIMDGSDEGVYAWITTNYLLGKIGGPDETPTAAVFDLGGGSTQIVFQPTFPKSKSGGMPERLSEGDHKYDLQFGGRHFELYQHSHLGYGLMAARKAIHTSIIENMLASSPKDLSWLKQPIPNPCIGPEMEKNVTLEFPEGHKLAPEVQVTMVGPKVGSTAAQCRGLAEKTLNKEAACTLAPCSFNGVHQPSLEKTFAREDVYIFSYFYDRTKPLGMPDSFTLDELHQLTSTVCGGEDSWGIFAGIEGALKELRDRPEWCLDLNFMMSLLHTGYEMPLSREVKIAKKIKNRELGWCLGASLPLLSQESGWTCRIKEVS</sequence>
<keyword id="KW-0325">Glycoprotein</keyword>
<keyword id="KW-0333">Golgi apparatus</keyword>
<keyword id="KW-0378">Hydrolase</keyword>
<keyword id="KW-0472">Membrane</keyword>
<keyword id="KW-1185">Reference proteome</keyword>
<keyword id="KW-0735">Signal-anchor</keyword>
<keyword id="KW-0812">Transmembrane</keyword>
<keyword id="KW-1133">Transmembrane helix</keyword>
<protein>
    <recommendedName>
        <fullName>Probable guanosine-diphosphatase</fullName>
        <shortName>GDPase</shortName>
        <ecNumber>3.6.1.42</ecNumber>
    </recommendedName>
</protein>
<dbReference type="EC" id="3.6.1.42"/>
<dbReference type="EMBL" id="AL683874">
    <property type="protein sequence ID" value="CAD27295.1"/>
    <property type="status" value="ALT_INIT"/>
    <property type="molecule type" value="Genomic_DNA"/>
</dbReference>
<dbReference type="EMBL" id="BX649605">
    <property type="protein sequence ID" value="CAE47942.1"/>
    <property type="molecule type" value="Genomic_DNA"/>
</dbReference>
<dbReference type="EMBL" id="AAHF01000004">
    <property type="protein sequence ID" value="EAL90545.1"/>
    <property type="molecule type" value="Genomic_DNA"/>
</dbReference>
<dbReference type="RefSeq" id="XP_752583.1">
    <property type="nucleotide sequence ID" value="XM_747490.1"/>
</dbReference>
<dbReference type="SMR" id="Q8TGG8"/>
<dbReference type="FunCoup" id="Q8TGG8">
    <property type="interactions" value="371"/>
</dbReference>
<dbReference type="STRING" id="330879.Q8TGG8"/>
<dbReference type="GlyCosmos" id="Q8TGG8">
    <property type="glycosylation" value="1 site, No reported glycans"/>
</dbReference>
<dbReference type="EnsemblFungi" id="EAL90545">
    <property type="protein sequence ID" value="EAL90545"/>
    <property type="gene ID" value="AFUA_1G12150"/>
</dbReference>
<dbReference type="GeneID" id="3510633"/>
<dbReference type="KEGG" id="afm:AFUA_1G12150"/>
<dbReference type="eggNOG" id="KOG1385">
    <property type="taxonomic scope" value="Eukaryota"/>
</dbReference>
<dbReference type="HOGENOM" id="CLU_010246_4_0_1"/>
<dbReference type="InParanoid" id="Q8TGG8"/>
<dbReference type="OMA" id="WTCRIKE"/>
<dbReference type="OrthoDB" id="6372431at2759"/>
<dbReference type="UniPathway" id="UPA00378"/>
<dbReference type="Proteomes" id="UP000002530">
    <property type="component" value="Chromosome 1"/>
</dbReference>
<dbReference type="GO" id="GO:0005794">
    <property type="term" value="C:Golgi apparatus"/>
    <property type="evidence" value="ECO:0000318"/>
    <property type="project" value="GO_Central"/>
</dbReference>
<dbReference type="GO" id="GO:0000139">
    <property type="term" value="C:Golgi membrane"/>
    <property type="evidence" value="ECO:0007669"/>
    <property type="project" value="UniProtKB-SubCell"/>
</dbReference>
<dbReference type="GO" id="GO:0016020">
    <property type="term" value="C:membrane"/>
    <property type="evidence" value="ECO:0000318"/>
    <property type="project" value="GO_Central"/>
</dbReference>
<dbReference type="GO" id="GO:0004382">
    <property type="term" value="F:GDP phosphatase activity"/>
    <property type="evidence" value="ECO:0000318"/>
    <property type="project" value="GO_Central"/>
</dbReference>
<dbReference type="GO" id="GO:0017111">
    <property type="term" value="F:ribonucleoside triphosphate phosphatase activity"/>
    <property type="evidence" value="ECO:0000318"/>
    <property type="project" value="GO_Central"/>
</dbReference>
<dbReference type="GO" id="GO:0045134">
    <property type="term" value="F:UDP phosphatase activity"/>
    <property type="evidence" value="ECO:0000318"/>
    <property type="project" value="GO_Central"/>
</dbReference>
<dbReference type="GO" id="GO:0009134">
    <property type="term" value="P:nucleoside diphosphate catabolic process"/>
    <property type="evidence" value="ECO:0000318"/>
    <property type="project" value="GO_Central"/>
</dbReference>
<dbReference type="GO" id="GO:0006487">
    <property type="term" value="P:protein N-linked glycosylation"/>
    <property type="evidence" value="ECO:0000318"/>
    <property type="project" value="GO_Central"/>
</dbReference>
<dbReference type="CDD" id="cd24040">
    <property type="entry name" value="ASKHA_NBD_GDA1"/>
    <property type="match status" value="1"/>
</dbReference>
<dbReference type="Gene3D" id="3.30.420.40">
    <property type="match status" value="1"/>
</dbReference>
<dbReference type="Gene3D" id="3.30.420.150">
    <property type="entry name" value="Exopolyphosphatase. Domain 2"/>
    <property type="match status" value="1"/>
</dbReference>
<dbReference type="InterPro" id="IPR000407">
    <property type="entry name" value="GDA1_CD39_NTPase"/>
</dbReference>
<dbReference type="PANTHER" id="PTHR11782">
    <property type="entry name" value="ADENOSINE/GUANOSINE DIPHOSPHATASE"/>
    <property type="match status" value="1"/>
</dbReference>
<dbReference type="PANTHER" id="PTHR11782:SF83">
    <property type="entry name" value="GUANOSINE-DIPHOSPHATASE"/>
    <property type="match status" value="1"/>
</dbReference>
<dbReference type="Pfam" id="PF01150">
    <property type="entry name" value="GDA1_CD39"/>
    <property type="match status" value="1"/>
</dbReference>
<dbReference type="PROSITE" id="PS01238">
    <property type="entry name" value="GDA1_CD39_NTPASE"/>
    <property type="match status" value="1"/>
</dbReference>
<evidence type="ECO:0000250" key="1"/>
<evidence type="ECO:0000255" key="2"/>
<evidence type="ECO:0000256" key="3">
    <source>
        <dbReference type="SAM" id="MobiDB-lite"/>
    </source>
</evidence>
<evidence type="ECO:0000305" key="4"/>
<comment type="function">
    <text evidence="1">After transfer of sugars to endogenous macromolecular acceptors, the enzyme converts nucleoside diphosphates to nucleoside monophosphates which in turn exit the Golgi lumen in a coupled antiporter reaction, allowing entry of additional nucleotide sugar from the cytosol.</text>
</comment>
<comment type="catalytic activity">
    <reaction>
        <text>GDP + H2O = GMP + phosphate + H(+)</text>
        <dbReference type="Rhea" id="RHEA:22156"/>
        <dbReference type="ChEBI" id="CHEBI:15377"/>
        <dbReference type="ChEBI" id="CHEBI:15378"/>
        <dbReference type="ChEBI" id="CHEBI:43474"/>
        <dbReference type="ChEBI" id="CHEBI:58115"/>
        <dbReference type="ChEBI" id="CHEBI:58189"/>
        <dbReference type="EC" id="3.6.1.42"/>
    </reaction>
</comment>
<comment type="pathway">
    <text>Protein modification; protein glycosylation.</text>
</comment>
<comment type="subcellular location">
    <subcellularLocation>
        <location evidence="1">Golgi apparatus membrane</location>
        <topology evidence="1">Single-pass type II membrane protein</topology>
    </subcellularLocation>
</comment>
<comment type="similarity">
    <text evidence="4">Belongs to the GDA1/CD39 NTPase family.</text>
</comment>
<comment type="sequence caution" evidence="4">
    <conflict type="erroneous initiation">
        <sequence resource="EMBL-CDS" id="CAD27295"/>
    </conflict>
</comment>
<proteinExistence type="inferred from homology"/>
<name>GDA1_ASPFU</name>
<reference key="1">
    <citation type="journal article" date="2004" name="Fungal Genet. Biol.">
        <title>Insight into the genome of Aspergillus fumigatus: analysis of a 922 kb region encompassing the nitrate assimilation gene cluster.</title>
        <authorList>
            <person name="Pain A."/>
            <person name="Woodward J.R."/>
            <person name="Quail M.A."/>
            <person name="Anderson M.J."/>
            <person name="Clark R."/>
            <person name="Collins M."/>
            <person name="Fosker N."/>
            <person name="Fraser A."/>
            <person name="Harris D.E."/>
            <person name="Larke N."/>
            <person name="Murphy L.D."/>
            <person name="Humphray S."/>
            <person name="O'Neil S."/>
            <person name="Pertea M."/>
            <person name="Price C."/>
            <person name="Rabbinowitsch E."/>
            <person name="Rajandream M.A."/>
            <person name="Salzberg S.L."/>
            <person name="Saunders D."/>
            <person name="Seeger K."/>
            <person name="Sharp S."/>
            <person name="Warren T."/>
            <person name="Denning D.W."/>
            <person name="Barrell B.G."/>
            <person name="Hall N."/>
        </authorList>
    </citation>
    <scope>NUCLEOTIDE SEQUENCE [LARGE SCALE GENOMIC DNA]</scope>
    <source>
        <strain>ATCC MYA-4609 / CBS 101355 / FGSC A1100 / Af293</strain>
    </source>
</reference>
<reference key="2">
    <citation type="journal article" date="2005" name="Nature">
        <title>Genomic sequence of the pathogenic and allergenic filamentous fungus Aspergillus fumigatus.</title>
        <authorList>
            <person name="Nierman W.C."/>
            <person name="Pain A."/>
            <person name="Anderson M.J."/>
            <person name="Wortman J.R."/>
            <person name="Kim H.S."/>
            <person name="Arroyo J."/>
            <person name="Berriman M."/>
            <person name="Abe K."/>
            <person name="Archer D.B."/>
            <person name="Bermejo C."/>
            <person name="Bennett J.W."/>
            <person name="Bowyer P."/>
            <person name="Chen D."/>
            <person name="Collins M."/>
            <person name="Coulsen R."/>
            <person name="Davies R."/>
            <person name="Dyer P.S."/>
            <person name="Farman M.L."/>
            <person name="Fedorova N."/>
            <person name="Fedorova N.D."/>
            <person name="Feldblyum T.V."/>
            <person name="Fischer R."/>
            <person name="Fosker N."/>
            <person name="Fraser A."/>
            <person name="Garcia J.L."/>
            <person name="Garcia M.J."/>
            <person name="Goble A."/>
            <person name="Goldman G.H."/>
            <person name="Gomi K."/>
            <person name="Griffith-Jones S."/>
            <person name="Gwilliam R."/>
            <person name="Haas B.J."/>
            <person name="Haas H."/>
            <person name="Harris D.E."/>
            <person name="Horiuchi H."/>
            <person name="Huang J."/>
            <person name="Humphray S."/>
            <person name="Jimenez J."/>
            <person name="Keller N."/>
            <person name="Khouri H."/>
            <person name="Kitamoto K."/>
            <person name="Kobayashi T."/>
            <person name="Konzack S."/>
            <person name="Kulkarni R."/>
            <person name="Kumagai T."/>
            <person name="Lafton A."/>
            <person name="Latge J.-P."/>
            <person name="Li W."/>
            <person name="Lord A."/>
            <person name="Lu C."/>
            <person name="Majoros W.H."/>
            <person name="May G.S."/>
            <person name="Miller B.L."/>
            <person name="Mohamoud Y."/>
            <person name="Molina M."/>
            <person name="Monod M."/>
            <person name="Mouyna I."/>
            <person name="Mulligan S."/>
            <person name="Murphy L.D."/>
            <person name="O'Neil S."/>
            <person name="Paulsen I."/>
            <person name="Penalva M.A."/>
            <person name="Pertea M."/>
            <person name="Price C."/>
            <person name="Pritchard B.L."/>
            <person name="Quail M.A."/>
            <person name="Rabbinowitsch E."/>
            <person name="Rawlins N."/>
            <person name="Rajandream M.A."/>
            <person name="Reichard U."/>
            <person name="Renauld H."/>
            <person name="Robson G.D."/>
            <person name="Rodriguez de Cordoba S."/>
            <person name="Rodriguez-Pena J.M."/>
            <person name="Ronning C.M."/>
            <person name="Rutter S."/>
            <person name="Salzberg S.L."/>
            <person name="Sanchez M."/>
            <person name="Sanchez-Ferrero J.C."/>
            <person name="Saunders D."/>
            <person name="Seeger K."/>
            <person name="Squares R."/>
            <person name="Squares S."/>
            <person name="Takeuchi M."/>
            <person name="Tekaia F."/>
            <person name="Turner G."/>
            <person name="Vazquez de Aldana C.R."/>
            <person name="Weidman J."/>
            <person name="White O."/>
            <person name="Woodward J.R."/>
            <person name="Yu J.-H."/>
            <person name="Fraser C.M."/>
            <person name="Galagan J.E."/>
            <person name="Asai K."/>
            <person name="Machida M."/>
            <person name="Hall N."/>
            <person name="Barrell B.G."/>
            <person name="Denning D.W."/>
        </authorList>
    </citation>
    <scope>NUCLEOTIDE SEQUENCE [LARGE SCALE GENOMIC DNA]</scope>
    <source>
        <strain>ATCC MYA-4609 / CBS 101355 / FGSC A1100 / Af293</strain>
    </source>
</reference>
<gene>
    <name type="primary">gda1</name>
    <name type="ORF">AfA14E5.03c</name>
    <name type="ORF">AFUA_1G12150</name>
</gene>
<organism>
    <name type="scientific">Aspergillus fumigatus (strain ATCC MYA-4609 / CBS 101355 / FGSC A1100 / Af293)</name>
    <name type="common">Neosartorya fumigata</name>
    <dbReference type="NCBI Taxonomy" id="330879"/>
    <lineage>
        <taxon>Eukaryota</taxon>
        <taxon>Fungi</taxon>
        <taxon>Dikarya</taxon>
        <taxon>Ascomycota</taxon>
        <taxon>Pezizomycotina</taxon>
        <taxon>Eurotiomycetes</taxon>
        <taxon>Eurotiomycetidae</taxon>
        <taxon>Eurotiales</taxon>
        <taxon>Aspergillaceae</taxon>
        <taxon>Aspergillus</taxon>
        <taxon>Aspergillus subgen. Fumigati</taxon>
    </lineage>
</organism>
<feature type="chain" id="PRO_0000209915" description="Probable guanosine-diphosphatase">
    <location>
        <begin position="1"/>
        <end position="503"/>
    </location>
</feature>
<feature type="topological domain" description="Cytoplasmic" evidence="2">
    <location>
        <begin position="1"/>
        <end position="8"/>
    </location>
</feature>
<feature type="transmembrane region" description="Helical; Signal-anchor for type II membrane protein" evidence="2">
    <location>
        <begin position="9"/>
        <end position="26"/>
    </location>
</feature>
<feature type="topological domain" description="Lumenal" evidence="2">
    <location>
        <begin position="27"/>
        <end position="503"/>
    </location>
</feature>
<feature type="region of interest" description="Disordered" evidence="3">
    <location>
        <begin position="34"/>
        <end position="55"/>
    </location>
</feature>
<feature type="active site" description="Proton acceptor" evidence="1">
    <location>
        <position position="194"/>
    </location>
</feature>
<feature type="glycosylation site" description="N-linked (GlcNAc...) asparagine" evidence="2">
    <location>
        <position position="318"/>
    </location>
</feature>